<gene>
    <name evidence="2" type="primary">nifS</name>
</gene>
<comment type="function">
    <text evidence="2">Catalyzes the removal of elemental sulfur atoms from cysteine to produce alanine. Seems to participate in the biosynthesis of the nitrogenase metalloclusters by providing the inorganic sulfur required for the Fe-S core formation.</text>
</comment>
<comment type="catalytic activity">
    <reaction evidence="2">
        <text>(sulfur carrier)-H + L-cysteine = (sulfur carrier)-SH + L-alanine</text>
        <dbReference type="Rhea" id="RHEA:43892"/>
        <dbReference type="Rhea" id="RHEA-COMP:14737"/>
        <dbReference type="Rhea" id="RHEA-COMP:14739"/>
        <dbReference type="ChEBI" id="CHEBI:29917"/>
        <dbReference type="ChEBI" id="CHEBI:35235"/>
        <dbReference type="ChEBI" id="CHEBI:57972"/>
        <dbReference type="ChEBI" id="CHEBI:64428"/>
        <dbReference type="EC" id="2.8.1.7"/>
    </reaction>
</comment>
<comment type="cofactor">
    <cofactor evidence="2">
        <name>pyridoxal 5'-phosphate</name>
        <dbReference type="ChEBI" id="CHEBI:597326"/>
    </cofactor>
</comment>
<comment type="subunit">
    <text evidence="2">Homodimer.</text>
</comment>
<comment type="similarity">
    <text evidence="5">Belongs to the class-V pyridoxal-phosphate-dependent aminotransferase family. NifS/IscS subfamily.</text>
</comment>
<protein>
    <recommendedName>
        <fullName evidence="2">Cysteine desulfurase</fullName>
        <ecNumber evidence="2">2.8.1.7</ecNumber>
    </recommendedName>
    <alternativeName>
        <fullName evidence="2">Nitrogenase metalloclusters biosynthesis protein NifS</fullName>
    </alternativeName>
</protein>
<evidence type="ECO:0000250" key="1">
    <source>
        <dbReference type="UniProtKB" id="O29689"/>
    </source>
</evidence>
<evidence type="ECO:0000250" key="2">
    <source>
        <dbReference type="UniProtKB" id="P05341"/>
    </source>
</evidence>
<evidence type="ECO:0000250" key="3">
    <source>
        <dbReference type="UniProtKB" id="P0A6B9"/>
    </source>
</evidence>
<evidence type="ECO:0000256" key="4">
    <source>
        <dbReference type="SAM" id="MobiDB-lite"/>
    </source>
</evidence>
<evidence type="ECO:0000305" key="5"/>
<feature type="chain" id="PRO_0000150250" description="Cysteine desulfurase">
    <location>
        <begin position="1"/>
        <end position="398"/>
    </location>
</feature>
<feature type="region of interest" description="Disordered" evidence="4">
    <location>
        <begin position="230"/>
        <end position="253"/>
    </location>
</feature>
<feature type="compositionally biased region" description="Basic and acidic residues" evidence="4">
    <location>
        <begin position="230"/>
        <end position="244"/>
    </location>
</feature>
<feature type="active site" description="Cysteine persulfide intermediate" evidence="2">
    <location>
        <position position="327"/>
    </location>
</feature>
<feature type="binding site" evidence="3">
    <location>
        <begin position="74"/>
        <end position="75"/>
    </location>
    <ligand>
        <name>pyridoxal 5'-phosphate</name>
        <dbReference type="ChEBI" id="CHEBI:597326"/>
    </ligand>
</feature>
<feature type="binding site" evidence="1">
    <location>
        <position position="155"/>
    </location>
    <ligand>
        <name>pyridoxal 5'-phosphate</name>
        <dbReference type="ChEBI" id="CHEBI:597326"/>
    </ligand>
</feature>
<feature type="binding site" evidence="3">
    <location>
        <position position="182"/>
    </location>
    <ligand>
        <name>pyridoxal 5'-phosphate</name>
        <dbReference type="ChEBI" id="CHEBI:597326"/>
    </ligand>
</feature>
<feature type="binding site" evidence="3">
    <location>
        <begin position="202"/>
        <end position="204"/>
    </location>
    <ligand>
        <name>pyridoxal 5'-phosphate</name>
        <dbReference type="ChEBI" id="CHEBI:597326"/>
    </ligand>
</feature>
<feature type="binding site" description="via persulfide group" evidence="1">
    <location>
        <position position="327"/>
    </location>
    <ligand>
        <name>[2Fe-2S] cluster</name>
        <dbReference type="ChEBI" id="CHEBI:190135"/>
    </ligand>
</feature>
<feature type="modified residue" description="N6-(pyridoxal phosphate)lysine" evidence="3">
    <location>
        <position position="205"/>
    </location>
</feature>
<name>NIFS_AZOBR</name>
<keyword id="KW-0408">Iron</keyword>
<keyword id="KW-0411">Iron-sulfur</keyword>
<keyword id="KW-0479">Metal-binding</keyword>
<keyword id="KW-0535">Nitrogen fixation</keyword>
<keyword id="KW-0663">Pyridoxal phosphate</keyword>
<keyword id="KW-0808">Transferase</keyword>
<proteinExistence type="inferred from homology"/>
<accession>P70727</accession>
<organism>
    <name type="scientific">Azospirillum brasilense</name>
    <dbReference type="NCBI Taxonomy" id="192"/>
    <lineage>
        <taxon>Bacteria</taxon>
        <taxon>Pseudomonadati</taxon>
        <taxon>Pseudomonadota</taxon>
        <taxon>Alphaproteobacteria</taxon>
        <taxon>Rhodospirillales</taxon>
        <taxon>Azospirillaceae</taxon>
        <taxon>Azospirillum</taxon>
    </lineage>
</organism>
<reference key="1">
    <citation type="journal article" date="1998" name="FEMS Microbiol. Lett.">
        <title>Sequencing and complementation analysis of the nifUSV genes from Azospirillum brasilense.</title>
        <authorList>
            <person name="Frazzon J.S."/>
            <person name="Schrank I.S."/>
        </authorList>
    </citation>
    <scope>NUCLEOTIDE SEQUENCE [GENOMIC DNA]</scope>
</reference>
<dbReference type="EC" id="2.8.1.7" evidence="2"/>
<dbReference type="EMBL" id="U26427">
    <property type="protein sequence ID" value="AAC46177.1"/>
    <property type="molecule type" value="Genomic_DNA"/>
</dbReference>
<dbReference type="SMR" id="P70727"/>
<dbReference type="GO" id="GO:0031071">
    <property type="term" value="F:cysteine desulfurase activity"/>
    <property type="evidence" value="ECO:0007669"/>
    <property type="project" value="UniProtKB-EC"/>
</dbReference>
<dbReference type="GO" id="GO:0051536">
    <property type="term" value="F:iron-sulfur cluster binding"/>
    <property type="evidence" value="ECO:0007669"/>
    <property type="project" value="UniProtKB-KW"/>
</dbReference>
<dbReference type="GO" id="GO:0046872">
    <property type="term" value="F:metal ion binding"/>
    <property type="evidence" value="ECO:0007669"/>
    <property type="project" value="UniProtKB-KW"/>
</dbReference>
<dbReference type="GO" id="GO:0009399">
    <property type="term" value="P:nitrogen fixation"/>
    <property type="evidence" value="ECO:0007669"/>
    <property type="project" value="UniProtKB-KW"/>
</dbReference>
<dbReference type="FunFam" id="3.40.640.10:FF:000084">
    <property type="entry name" value="IscS-like cysteine desulfurase"/>
    <property type="match status" value="1"/>
</dbReference>
<dbReference type="Gene3D" id="1.10.260.50">
    <property type="match status" value="1"/>
</dbReference>
<dbReference type="Gene3D" id="3.90.1150.10">
    <property type="entry name" value="Aspartate Aminotransferase, domain 1"/>
    <property type="match status" value="1"/>
</dbReference>
<dbReference type="Gene3D" id="3.40.640.10">
    <property type="entry name" value="Type I PLP-dependent aspartate aminotransferase-like (Major domain)"/>
    <property type="match status" value="1"/>
</dbReference>
<dbReference type="InterPro" id="IPR000192">
    <property type="entry name" value="Aminotrans_V_dom"/>
</dbReference>
<dbReference type="InterPro" id="IPR016454">
    <property type="entry name" value="Cysteine_dSase"/>
</dbReference>
<dbReference type="InterPro" id="IPR015424">
    <property type="entry name" value="PyrdxlP-dep_Trfase"/>
</dbReference>
<dbReference type="InterPro" id="IPR015421">
    <property type="entry name" value="PyrdxlP-dep_Trfase_major"/>
</dbReference>
<dbReference type="InterPro" id="IPR015422">
    <property type="entry name" value="PyrdxlP-dep_Trfase_small"/>
</dbReference>
<dbReference type="PANTHER" id="PTHR11601:SF34">
    <property type="entry name" value="CYSTEINE DESULFURASE"/>
    <property type="match status" value="1"/>
</dbReference>
<dbReference type="PANTHER" id="PTHR11601">
    <property type="entry name" value="CYSTEINE DESULFURYLASE FAMILY MEMBER"/>
    <property type="match status" value="1"/>
</dbReference>
<dbReference type="Pfam" id="PF00266">
    <property type="entry name" value="Aminotran_5"/>
    <property type="match status" value="1"/>
</dbReference>
<dbReference type="PIRSF" id="PIRSF005572">
    <property type="entry name" value="NifS"/>
    <property type="match status" value="1"/>
</dbReference>
<dbReference type="SUPFAM" id="SSF53383">
    <property type="entry name" value="PLP-dependent transferases"/>
    <property type="match status" value="1"/>
</dbReference>
<sequence>MTAQGIYLDNNATTRVDPDVLAEMLPLFTEQFGNPSSMHGFGAAVGGQDRMGAQAGAGAARAAHDSEIVFTSGGTESDNTAILSTLEAYPKKKSIVTSVVEHPAVLALCDYLEKKRGYTVHRIGVDNRGNLDLDAYKRCALGPDVAIVSIMWANNETGTIFPIEELAQLAKAAGAVFHTAVQAVGKIPMNVRHSAVDMLCACGHKLHAPKGVHALYVKRGLRFRPIVRGGHQERSRRAGNGERAGHRRAGGGAHVALMHMTDENTRVKRSRQAGAAILAAVPNCFVTGNPANRLPNTCNVAFEYIEGEAILLLLNEADIAASSGSACTSGSLEPSHVMRAMGVPYTAAHGPTRLSLSRETTEEEIDRVIRVVPGMRTGRSVSPYWSQAAPEGVRPVYS</sequence>